<dbReference type="EMBL" id="CP000077">
    <property type="protein sequence ID" value="AAY80050.1"/>
    <property type="molecule type" value="Genomic_DNA"/>
</dbReference>
<dbReference type="EMBL" id="AF149924">
    <property type="protein sequence ID" value="AAF03365.1"/>
    <property type="molecule type" value="Genomic_DNA"/>
</dbReference>
<dbReference type="RefSeq" id="WP_011277552.1">
    <property type="nucleotide sequence ID" value="NC_007181.1"/>
</dbReference>
<dbReference type="SMR" id="Q9V2T4"/>
<dbReference type="STRING" id="330779.Saci_0666"/>
<dbReference type="GeneID" id="14551185"/>
<dbReference type="GeneID" id="78441010"/>
<dbReference type="KEGG" id="sai:Saci_0666"/>
<dbReference type="PATRIC" id="fig|330779.12.peg.636"/>
<dbReference type="eggNOG" id="arCOG01257">
    <property type="taxonomic scope" value="Archaea"/>
</dbReference>
<dbReference type="HOGENOM" id="CLU_008891_7_3_2"/>
<dbReference type="Proteomes" id="UP000001018">
    <property type="component" value="Chromosome"/>
</dbReference>
<dbReference type="GO" id="GO:0005524">
    <property type="term" value="F:ATP binding"/>
    <property type="evidence" value="ECO:0007669"/>
    <property type="project" value="UniProtKB-KW"/>
</dbReference>
<dbReference type="GO" id="GO:0016887">
    <property type="term" value="F:ATP hydrolysis activity"/>
    <property type="evidence" value="ECO:0007669"/>
    <property type="project" value="InterPro"/>
</dbReference>
<dbReference type="GO" id="GO:0140662">
    <property type="term" value="F:ATP-dependent protein folding chaperone"/>
    <property type="evidence" value="ECO:0007669"/>
    <property type="project" value="InterPro"/>
</dbReference>
<dbReference type="GO" id="GO:0051082">
    <property type="term" value="F:unfolded protein binding"/>
    <property type="evidence" value="ECO:0007669"/>
    <property type="project" value="InterPro"/>
</dbReference>
<dbReference type="CDD" id="cd03343">
    <property type="entry name" value="cpn60"/>
    <property type="match status" value="1"/>
</dbReference>
<dbReference type="FunFam" id="3.50.7.10:FF:000014">
    <property type="entry name" value="Thermosome subunit"/>
    <property type="match status" value="1"/>
</dbReference>
<dbReference type="Gene3D" id="3.50.7.10">
    <property type="entry name" value="GroEL"/>
    <property type="match status" value="1"/>
</dbReference>
<dbReference type="Gene3D" id="1.10.560.10">
    <property type="entry name" value="GroEL-like equatorial domain"/>
    <property type="match status" value="1"/>
</dbReference>
<dbReference type="Gene3D" id="3.30.260.10">
    <property type="entry name" value="TCP-1-like chaperonin intermediate domain"/>
    <property type="match status" value="1"/>
</dbReference>
<dbReference type="InterPro" id="IPR017998">
    <property type="entry name" value="Chaperone_TCP-1"/>
</dbReference>
<dbReference type="InterPro" id="IPR002194">
    <property type="entry name" value="Chaperonin_TCP-1_CS"/>
</dbReference>
<dbReference type="InterPro" id="IPR002423">
    <property type="entry name" value="Cpn60/GroEL/TCP-1"/>
</dbReference>
<dbReference type="InterPro" id="IPR027409">
    <property type="entry name" value="GroEL-like_apical_dom_sf"/>
</dbReference>
<dbReference type="InterPro" id="IPR027413">
    <property type="entry name" value="GROEL-like_equatorial_sf"/>
</dbReference>
<dbReference type="InterPro" id="IPR027410">
    <property type="entry name" value="TCP-1-like_intermed_sf"/>
</dbReference>
<dbReference type="InterPro" id="IPR053374">
    <property type="entry name" value="TCP-1_chaperonin"/>
</dbReference>
<dbReference type="InterPro" id="IPR054827">
    <property type="entry name" value="thermosome_alpha"/>
</dbReference>
<dbReference type="InterPro" id="IPR012714">
    <property type="entry name" value="Thermosome_arc"/>
</dbReference>
<dbReference type="NCBIfam" id="NF041082">
    <property type="entry name" value="thermosome_alpha"/>
    <property type="match status" value="1"/>
</dbReference>
<dbReference type="NCBIfam" id="TIGR02339">
    <property type="entry name" value="thermosome_arch"/>
    <property type="match status" value="1"/>
</dbReference>
<dbReference type="NCBIfam" id="NF041083">
    <property type="entry name" value="thermosome_beta"/>
    <property type="match status" value="1"/>
</dbReference>
<dbReference type="PANTHER" id="PTHR11353">
    <property type="entry name" value="CHAPERONIN"/>
    <property type="match status" value="1"/>
</dbReference>
<dbReference type="Pfam" id="PF00118">
    <property type="entry name" value="Cpn60_TCP1"/>
    <property type="match status" value="1"/>
</dbReference>
<dbReference type="PRINTS" id="PR00304">
    <property type="entry name" value="TCOMPLEXTCP1"/>
</dbReference>
<dbReference type="SUPFAM" id="SSF52029">
    <property type="entry name" value="GroEL apical domain-like"/>
    <property type="match status" value="1"/>
</dbReference>
<dbReference type="SUPFAM" id="SSF48592">
    <property type="entry name" value="GroEL equatorial domain-like"/>
    <property type="match status" value="1"/>
</dbReference>
<dbReference type="SUPFAM" id="SSF54849">
    <property type="entry name" value="GroEL-intermediate domain like"/>
    <property type="match status" value="1"/>
</dbReference>
<dbReference type="PROSITE" id="PS00750">
    <property type="entry name" value="TCP1_1"/>
    <property type="match status" value="1"/>
</dbReference>
<dbReference type="PROSITE" id="PS00751">
    <property type="entry name" value="TCP1_2"/>
    <property type="match status" value="1"/>
</dbReference>
<dbReference type="PROSITE" id="PS00995">
    <property type="entry name" value="TCP1_3"/>
    <property type="match status" value="1"/>
</dbReference>
<keyword id="KW-0067">ATP-binding</keyword>
<keyword id="KW-0143">Chaperone</keyword>
<keyword id="KW-0547">Nucleotide-binding</keyword>
<keyword id="KW-1185">Reference proteome</keyword>
<reference key="1">
    <citation type="journal article" date="2005" name="J. Bacteriol.">
        <title>The genome of Sulfolobus acidocaldarius, a model organism of the Crenarchaeota.</title>
        <authorList>
            <person name="Chen L."/>
            <person name="Bruegger K."/>
            <person name="Skovgaard M."/>
            <person name="Redder P."/>
            <person name="She Q."/>
            <person name="Torarinsson E."/>
            <person name="Greve B."/>
            <person name="Awayez M."/>
            <person name="Zibat A."/>
            <person name="Klenk H.-P."/>
            <person name="Garrett R.A."/>
        </authorList>
    </citation>
    <scope>NUCLEOTIDE SEQUENCE [LARGE SCALE GENOMIC DNA]</scope>
    <source>
        <strain>ATCC 33909 / DSM 639 / JCM 8929 / NBRC 15157 / NCIMB 11770</strain>
    </source>
</reference>
<reference key="2">
    <citation type="journal article" date="1999" name="Curr. Biol.">
        <title>Recurrent paralogy in the evolution of archaeal chaperonins.</title>
        <authorList>
            <person name="Archibald J.M."/>
            <person name="Logsdon J.M. Jr."/>
            <person name="Doolittle W.F."/>
        </authorList>
    </citation>
    <scope>NUCLEOTIDE SEQUENCE [GENOMIC DNA] OF 15-509</scope>
</reference>
<proteinExistence type="inferred from homology"/>
<evidence type="ECO:0000250" key="1"/>
<evidence type="ECO:0000256" key="2">
    <source>
        <dbReference type="SAM" id="MobiDB-lite"/>
    </source>
</evidence>
<evidence type="ECO:0000305" key="3"/>
<accession>Q9V2T4</accession>
<accession>Q4JAX9</accession>
<organism>
    <name type="scientific">Sulfolobus acidocaldarius (strain ATCC 33909 / DSM 639 / JCM 8929 / NBRC 15157 / NCIMB 11770)</name>
    <dbReference type="NCBI Taxonomy" id="330779"/>
    <lineage>
        <taxon>Archaea</taxon>
        <taxon>Thermoproteota</taxon>
        <taxon>Thermoprotei</taxon>
        <taxon>Sulfolobales</taxon>
        <taxon>Sulfolobaceae</taxon>
        <taxon>Sulfolobus</taxon>
    </lineage>
</organism>
<protein>
    <recommendedName>
        <fullName>Thermosome subunit beta</fullName>
    </recommendedName>
    <alternativeName>
        <fullName>Chaperonin subunit beta</fullName>
    </alternativeName>
    <alternativeName>
        <fullName>Thermophilic factor 55 beta</fullName>
        <shortName>TF55-beta</shortName>
    </alternativeName>
    <alternativeName>
        <fullName>Thermosome subunit 2</fullName>
    </alternativeName>
</protein>
<feature type="chain" id="PRO_0000128400" description="Thermosome subunit beta">
    <location>
        <begin position="1"/>
        <end position="553"/>
    </location>
</feature>
<feature type="region of interest" description="Disordered" evidence="2">
    <location>
        <begin position="534"/>
        <end position="553"/>
    </location>
</feature>
<comment type="function">
    <text evidence="1">Molecular chaperone; binds unfolded polypeptides in vitro, and has a weak ATPase activity.</text>
</comment>
<comment type="subunit">
    <text evidence="1">Forms a Heterooligomeric complex of two stacked eight-membered rings.</text>
</comment>
<comment type="similarity">
    <text evidence="3">Belongs to the TCP-1 chaperonin family.</text>
</comment>
<sequence>MSATATVATTPEGIPVIILKEGSSRTYGKEALRINIAAVKAVEEALKTTYGPRGMDKMLVDSLGDITITNDGATILDKMDLQHPAAKLLVQIAKGQDEETADGTKTAVIFSGELVKKAEELLYKEIHPTIIVSGYKKAEEMAIKTIEEISTKVSVNDTEILRKVALTSLSSKAVAGAREHLADIVVKAITQVAELRGDKWYVDLDNVQIVKKHGGSINDTQIVYGIIVDKEVVHPGMPKRVENAKIALLDASLEVEKPELDAEIRINDPTQMKKFLDEEENILKEKVDKIAQTGANVVICQKGIDEVAQHYLAKKGILAVRRAKKSDLEKLARATGGRVVSNIDELTSQDLGYATLVEERKIGEDKMVFIEGAKNPKAVSILIRGGLERVVDETERALRDALGTVADVVRDGRAIAGGGAVETEIAKRLRKYAPQVGGKEQLAIEAYANALESLVMILIENGGFDPIELLVKLRSAHENETNKWHGINVYTGQIQDMWSLGVIEPAVVKMNAIKAATEASTLILRIDDLISAGKKSEGKTGEKKESEKGKEED</sequence>
<gene>
    <name type="primary">thsB</name>
    <name type="ordered locus">Saci_0666</name>
</gene>
<name>THSB_SULAC</name>